<reference key="1">
    <citation type="journal article" date="2004" name="Environ. Microbiol.">
        <title>The genome of Desulfotalea psychrophila, a sulfate-reducing bacterium from permanently cold Arctic sediments.</title>
        <authorList>
            <person name="Rabus R."/>
            <person name="Ruepp A."/>
            <person name="Frickey T."/>
            <person name="Rattei T."/>
            <person name="Fartmann B."/>
            <person name="Stark M."/>
            <person name="Bauer M."/>
            <person name="Zibat A."/>
            <person name="Lombardot T."/>
            <person name="Becker I."/>
            <person name="Amann J."/>
            <person name="Gellner K."/>
            <person name="Teeling H."/>
            <person name="Leuschner W.D."/>
            <person name="Gloeckner F.-O."/>
            <person name="Lupas A.N."/>
            <person name="Amann R."/>
            <person name="Klenk H.-P."/>
        </authorList>
    </citation>
    <scope>NUCLEOTIDE SEQUENCE [LARGE SCALE GENOMIC DNA]</scope>
    <source>
        <strain>DSM 12343 / LSv54</strain>
    </source>
</reference>
<dbReference type="EMBL" id="CR522870">
    <property type="protein sequence ID" value="CAG37462.1"/>
    <property type="molecule type" value="Genomic_DNA"/>
</dbReference>
<dbReference type="RefSeq" id="WP_011189974.1">
    <property type="nucleotide sequence ID" value="NC_006138.1"/>
</dbReference>
<dbReference type="SMR" id="Q6AJL8"/>
<dbReference type="STRING" id="177439.DP2733"/>
<dbReference type="KEGG" id="dps:DP2733"/>
<dbReference type="eggNOG" id="COG1825">
    <property type="taxonomic scope" value="Bacteria"/>
</dbReference>
<dbReference type="HOGENOM" id="CLU_075939_2_1_7"/>
<dbReference type="OrthoDB" id="9786489at2"/>
<dbReference type="Proteomes" id="UP000000602">
    <property type="component" value="Chromosome"/>
</dbReference>
<dbReference type="GO" id="GO:0022625">
    <property type="term" value="C:cytosolic large ribosomal subunit"/>
    <property type="evidence" value="ECO:0007669"/>
    <property type="project" value="TreeGrafter"/>
</dbReference>
<dbReference type="GO" id="GO:0008097">
    <property type="term" value="F:5S rRNA binding"/>
    <property type="evidence" value="ECO:0007669"/>
    <property type="project" value="InterPro"/>
</dbReference>
<dbReference type="GO" id="GO:0003735">
    <property type="term" value="F:structural constituent of ribosome"/>
    <property type="evidence" value="ECO:0007669"/>
    <property type="project" value="InterPro"/>
</dbReference>
<dbReference type="GO" id="GO:0006412">
    <property type="term" value="P:translation"/>
    <property type="evidence" value="ECO:0007669"/>
    <property type="project" value="UniProtKB-UniRule"/>
</dbReference>
<dbReference type="CDD" id="cd00495">
    <property type="entry name" value="Ribosomal_L25_TL5_CTC"/>
    <property type="match status" value="1"/>
</dbReference>
<dbReference type="Gene3D" id="2.170.120.20">
    <property type="entry name" value="Ribosomal protein L25, beta domain"/>
    <property type="match status" value="1"/>
</dbReference>
<dbReference type="Gene3D" id="2.40.240.10">
    <property type="entry name" value="Ribosomal Protein L25, Chain P"/>
    <property type="match status" value="1"/>
</dbReference>
<dbReference type="HAMAP" id="MF_01334">
    <property type="entry name" value="Ribosomal_bL25_CTC"/>
    <property type="match status" value="1"/>
</dbReference>
<dbReference type="InterPro" id="IPR020056">
    <property type="entry name" value="Rbsml_bL25/Gln-tRNA_synth_N"/>
</dbReference>
<dbReference type="InterPro" id="IPR011035">
    <property type="entry name" value="Ribosomal_bL25/Gln-tRNA_synth"/>
</dbReference>
<dbReference type="InterPro" id="IPR020057">
    <property type="entry name" value="Ribosomal_bL25_b-dom"/>
</dbReference>
<dbReference type="InterPro" id="IPR037121">
    <property type="entry name" value="Ribosomal_bL25_C"/>
</dbReference>
<dbReference type="InterPro" id="IPR001021">
    <property type="entry name" value="Ribosomal_bL25_long"/>
</dbReference>
<dbReference type="InterPro" id="IPR029751">
    <property type="entry name" value="Ribosomal_L25_dom"/>
</dbReference>
<dbReference type="InterPro" id="IPR020930">
    <property type="entry name" value="Ribosomal_uL5_bac-type"/>
</dbReference>
<dbReference type="NCBIfam" id="TIGR00731">
    <property type="entry name" value="bL25_bact_ctc"/>
    <property type="match status" value="1"/>
</dbReference>
<dbReference type="PANTHER" id="PTHR33284">
    <property type="entry name" value="RIBOSOMAL PROTEIN L25/GLN-TRNA SYNTHETASE, ANTI-CODON-BINDING DOMAIN-CONTAINING PROTEIN"/>
    <property type="match status" value="1"/>
</dbReference>
<dbReference type="PANTHER" id="PTHR33284:SF1">
    <property type="entry name" value="RIBOSOMAL PROTEIN L25_GLN-TRNA SYNTHETASE, ANTI-CODON-BINDING DOMAIN-CONTAINING PROTEIN"/>
    <property type="match status" value="1"/>
</dbReference>
<dbReference type="Pfam" id="PF01386">
    <property type="entry name" value="Ribosomal_L25p"/>
    <property type="match status" value="1"/>
</dbReference>
<dbReference type="Pfam" id="PF14693">
    <property type="entry name" value="Ribosomal_TL5_C"/>
    <property type="match status" value="1"/>
</dbReference>
<dbReference type="SUPFAM" id="SSF50715">
    <property type="entry name" value="Ribosomal protein L25-like"/>
    <property type="match status" value="1"/>
</dbReference>
<protein>
    <recommendedName>
        <fullName evidence="1">Large ribosomal subunit protein bL25</fullName>
    </recommendedName>
    <alternativeName>
        <fullName evidence="2">50S ribosomal protein L25</fullName>
    </alternativeName>
    <alternativeName>
        <fullName evidence="1">General stress protein CTC</fullName>
    </alternativeName>
</protein>
<comment type="function">
    <text evidence="1">This is one of the proteins that binds to the 5S RNA in the ribosome where it forms part of the central protuberance.</text>
</comment>
<comment type="subunit">
    <text evidence="1">Part of the 50S ribosomal subunit; part of the 5S rRNA/L5/L18/L25 subcomplex. Contacts the 5S rRNA. Binds to the 5S rRNA independently of L5 and L18.</text>
</comment>
<comment type="similarity">
    <text evidence="1">Belongs to the bacterial ribosomal protein bL25 family. CTC subfamily.</text>
</comment>
<accession>Q6AJL8</accession>
<feature type="chain" id="PRO_0000181544" description="Large ribosomal subunit protein bL25">
    <location>
        <begin position="1"/>
        <end position="183"/>
    </location>
</feature>
<evidence type="ECO:0000255" key="1">
    <source>
        <dbReference type="HAMAP-Rule" id="MF_01334"/>
    </source>
</evidence>
<evidence type="ECO:0000305" key="2"/>
<name>RL25_DESPS</name>
<gene>
    <name evidence="1" type="primary">rplY</name>
    <name evidence="1" type="synonym">ctc</name>
    <name type="ordered locus">DP2733</name>
</gene>
<sequence>MFQVEMTASVREAFGKGPMRRLRQQGITPAVVYGAGKAALPLQMDAKILMTQLLEFSRVNTVVSLSVDGQDAKNVVIAEIQSDPVTDALVHVDFCEIDLDQAREFTVPVTFEGTPKGVDLGGRLESHLTSVILKAKPLDIPNEFVINIADLAIDEQLTVADVALAENVVMVTPAARVMVAVLK</sequence>
<keyword id="KW-1185">Reference proteome</keyword>
<keyword id="KW-0687">Ribonucleoprotein</keyword>
<keyword id="KW-0689">Ribosomal protein</keyword>
<keyword id="KW-0694">RNA-binding</keyword>
<keyword id="KW-0699">rRNA-binding</keyword>
<proteinExistence type="inferred from homology"/>
<organism>
    <name type="scientific">Desulfotalea psychrophila (strain LSv54 / DSM 12343)</name>
    <dbReference type="NCBI Taxonomy" id="177439"/>
    <lineage>
        <taxon>Bacteria</taxon>
        <taxon>Pseudomonadati</taxon>
        <taxon>Thermodesulfobacteriota</taxon>
        <taxon>Desulfobulbia</taxon>
        <taxon>Desulfobulbales</taxon>
        <taxon>Desulfocapsaceae</taxon>
        <taxon>Desulfotalea</taxon>
    </lineage>
</organism>